<accession>B1X9G8</accession>
<feature type="chain" id="PRO_1000200353" description="tRNA uridine(34) hydroxylase">
    <location>
        <begin position="1"/>
        <end position="350"/>
    </location>
</feature>
<feature type="domain" description="Rhodanese" evidence="2">
    <location>
        <begin position="146"/>
        <end position="240"/>
    </location>
</feature>
<feature type="active site" description="Cysteine persulfide intermediate" evidence="2">
    <location>
        <position position="200"/>
    </location>
</feature>
<comment type="function">
    <text evidence="1">Catalyzes oxygen-dependent 5-hydroxyuridine (ho5U) modification at position 34 in tRNAs, the first step in 5-carboxymethoxyuridine (cmo5U) biosynthesis. May be part of an alternate pathway, which is able to bypass cmo5U biogenesis in a subset of tRNAs under aerobic conditions.</text>
</comment>
<comment type="catalytic activity">
    <reaction evidence="2">
        <text>uridine(34) in tRNA + AH2 + O2 = 5-hydroxyuridine(34) in tRNA + A + H2O</text>
        <dbReference type="Rhea" id="RHEA:64224"/>
        <dbReference type="Rhea" id="RHEA-COMP:11727"/>
        <dbReference type="Rhea" id="RHEA-COMP:13381"/>
        <dbReference type="ChEBI" id="CHEBI:13193"/>
        <dbReference type="ChEBI" id="CHEBI:15377"/>
        <dbReference type="ChEBI" id="CHEBI:15379"/>
        <dbReference type="ChEBI" id="CHEBI:17499"/>
        <dbReference type="ChEBI" id="CHEBI:65315"/>
        <dbReference type="ChEBI" id="CHEBI:136877"/>
    </reaction>
</comment>
<comment type="similarity">
    <text evidence="2">Belongs to the TrhO family.</text>
</comment>
<organism>
    <name type="scientific">Escherichia coli (strain K12 / DH10B)</name>
    <dbReference type="NCBI Taxonomy" id="316385"/>
    <lineage>
        <taxon>Bacteria</taxon>
        <taxon>Pseudomonadati</taxon>
        <taxon>Pseudomonadota</taxon>
        <taxon>Gammaproteobacteria</taxon>
        <taxon>Enterobacterales</taxon>
        <taxon>Enterobacteriaceae</taxon>
        <taxon>Escherichia</taxon>
    </lineage>
</organism>
<protein>
    <recommendedName>
        <fullName evidence="2">tRNA uridine(34) hydroxylase</fullName>
        <ecNumber evidence="2">1.14.-.-</ecNumber>
    </recommendedName>
    <alternativeName>
        <fullName evidence="2">tRNA hydroxylation protein O</fullName>
    </alternativeName>
</protein>
<reference key="1">
    <citation type="journal article" date="2008" name="J. Bacteriol.">
        <title>The complete genome sequence of Escherichia coli DH10B: insights into the biology of a laboratory workhorse.</title>
        <authorList>
            <person name="Durfee T."/>
            <person name="Nelson R."/>
            <person name="Baldwin S."/>
            <person name="Plunkett G. III"/>
            <person name="Burland V."/>
            <person name="Mau B."/>
            <person name="Petrosino J.F."/>
            <person name="Qin X."/>
            <person name="Muzny D.M."/>
            <person name="Ayele M."/>
            <person name="Gibbs R.A."/>
            <person name="Csorgo B."/>
            <person name="Posfai G."/>
            <person name="Weinstock G.M."/>
            <person name="Blattner F.R."/>
        </authorList>
    </citation>
    <scope>NUCLEOTIDE SEQUENCE [LARGE SCALE GENOMIC DNA]</scope>
    <source>
        <strain>K12 / DH10B</strain>
    </source>
</reference>
<evidence type="ECO:0000250" key="1">
    <source>
        <dbReference type="UniProtKB" id="P24188"/>
    </source>
</evidence>
<evidence type="ECO:0000255" key="2">
    <source>
        <dbReference type="HAMAP-Rule" id="MF_00469"/>
    </source>
</evidence>
<keyword id="KW-0560">Oxidoreductase</keyword>
<keyword id="KW-0819">tRNA processing</keyword>
<gene>
    <name evidence="2" type="primary">trhO</name>
    <name type="synonym">yceA</name>
    <name type="ordered locus">ECDH10B_1126</name>
</gene>
<name>TRHO_ECODH</name>
<proteinExistence type="inferred from homology"/>
<sequence>MPVLHNRISNDALKAKMLAESEPRTTISFYKYFHIADPKATRDALYQLFTALNVFGRVYLAHEGINAQISVPASNVETFRAQLYAFDPALEGLRLNIALDDDGKSFWVLRMKVRDRIVADGIDDPHFDASNVGEYLQAAEVNAMLDDPDALFIDMRNHYEYEVGHFENALEIPADTFREQLPKAVEMMQAHKDKKIVMYCTGGIRCEKASAWMKHNGFNKVWHIEGGIIEYARKAREQGLPVRFIGKNFVFDERMGERISDEIIAHCHQCGAPCDSHTNCKNDGCHLLFIQCPVCAEKYKGCCSEICCEESALPPEEQRRRRAGRENGNKIFNKSRGRLNTTLCIPDPTE</sequence>
<dbReference type="EC" id="1.14.-.-" evidence="2"/>
<dbReference type="EMBL" id="CP000948">
    <property type="protein sequence ID" value="ACB02248.1"/>
    <property type="molecule type" value="Genomic_DNA"/>
</dbReference>
<dbReference type="RefSeq" id="WP_001144615.1">
    <property type="nucleotide sequence ID" value="NC_010473.1"/>
</dbReference>
<dbReference type="SMR" id="B1X9G8"/>
<dbReference type="KEGG" id="ecd:ECDH10B_1126"/>
<dbReference type="HOGENOM" id="CLU_038878_1_1_6"/>
<dbReference type="GO" id="GO:0016705">
    <property type="term" value="F:oxidoreductase activity, acting on paired donors, with incorporation or reduction of molecular oxygen"/>
    <property type="evidence" value="ECO:0007669"/>
    <property type="project" value="UniProtKB-UniRule"/>
</dbReference>
<dbReference type="GO" id="GO:0006400">
    <property type="term" value="P:tRNA modification"/>
    <property type="evidence" value="ECO:0007669"/>
    <property type="project" value="UniProtKB-UniRule"/>
</dbReference>
<dbReference type="CDD" id="cd01518">
    <property type="entry name" value="RHOD_YceA"/>
    <property type="match status" value="1"/>
</dbReference>
<dbReference type="Gene3D" id="3.30.70.100">
    <property type="match status" value="1"/>
</dbReference>
<dbReference type="Gene3D" id="3.40.250.10">
    <property type="entry name" value="Rhodanese-like domain"/>
    <property type="match status" value="1"/>
</dbReference>
<dbReference type="HAMAP" id="MF_00469">
    <property type="entry name" value="TrhO"/>
    <property type="match status" value="1"/>
</dbReference>
<dbReference type="InterPro" id="IPR001763">
    <property type="entry name" value="Rhodanese-like_dom"/>
</dbReference>
<dbReference type="InterPro" id="IPR036873">
    <property type="entry name" value="Rhodanese-like_dom_sf"/>
</dbReference>
<dbReference type="InterPro" id="IPR022111">
    <property type="entry name" value="Rhodanese_C"/>
</dbReference>
<dbReference type="InterPro" id="IPR020936">
    <property type="entry name" value="TrhO"/>
</dbReference>
<dbReference type="InterPro" id="IPR040503">
    <property type="entry name" value="TRHO_N"/>
</dbReference>
<dbReference type="NCBIfam" id="NF001133">
    <property type="entry name" value="PRK00142.1-1"/>
    <property type="match status" value="1"/>
</dbReference>
<dbReference type="PANTHER" id="PTHR43846:SF1">
    <property type="entry name" value="TRNA URIDINE(34) HYDROXYLASE"/>
    <property type="match status" value="1"/>
</dbReference>
<dbReference type="PANTHER" id="PTHR43846">
    <property type="entry name" value="UPF0176 PROTEIN YCEA"/>
    <property type="match status" value="1"/>
</dbReference>
<dbReference type="Pfam" id="PF00581">
    <property type="entry name" value="Rhodanese"/>
    <property type="match status" value="1"/>
</dbReference>
<dbReference type="Pfam" id="PF12368">
    <property type="entry name" value="Rhodanese_C"/>
    <property type="match status" value="1"/>
</dbReference>
<dbReference type="Pfam" id="PF17773">
    <property type="entry name" value="UPF0176_N"/>
    <property type="match status" value="1"/>
</dbReference>
<dbReference type="SMART" id="SM00450">
    <property type="entry name" value="RHOD"/>
    <property type="match status" value="1"/>
</dbReference>
<dbReference type="SUPFAM" id="SSF52821">
    <property type="entry name" value="Rhodanese/Cell cycle control phosphatase"/>
    <property type="match status" value="1"/>
</dbReference>
<dbReference type="PROSITE" id="PS50206">
    <property type="entry name" value="RHODANESE_3"/>
    <property type="match status" value="1"/>
</dbReference>